<organism>
    <name type="scientific">Acholeplasma laidlawii (strain PG-8A)</name>
    <dbReference type="NCBI Taxonomy" id="441768"/>
    <lineage>
        <taxon>Bacteria</taxon>
        <taxon>Bacillati</taxon>
        <taxon>Mycoplasmatota</taxon>
        <taxon>Mollicutes</taxon>
        <taxon>Acholeplasmatales</taxon>
        <taxon>Acholeplasmataceae</taxon>
        <taxon>Acholeplasma</taxon>
    </lineage>
</organism>
<gene>
    <name evidence="1" type="primary">fusA</name>
    <name type="ordered locus">ACL_0187</name>
</gene>
<proteinExistence type="inferred from homology"/>
<accession>A9NEN3</accession>
<name>EFG_ACHLI</name>
<reference key="1">
    <citation type="journal article" date="2011" name="J. Bacteriol.">
        <title>Complete genome and proteome of Acholeplasma laidlawii.</title>
        <authorList>
            <person name="Lazarev V.N."/>
            <person name="Levitskii S.A."/>
            <person name="Basovskii Y.I."/>
            <person name="Chukin M.M."/>
            <person name="Akopian T.A."/>
            <person name="Vereshchagin V.V."/>
            <person name="Kostrjukova E.S."/>
            <person name="Kovaleva G.Y."/>
            <person name="Kazanov M.D."/>
            <person name="Malko D.B."/>
            <person name="Vitreschak A.G."/>
            <person name="Sernova N.V."/>
            <person name="Gelfand M.S."/>
            <person name="Demina I.A."/>
            <person name="Serebryakova M.V."/>
            <person name="Galyamina M.A."/>
            <person name="Vtyurin N.N."/>
            <person name="Rogov S.I."/>
            <person name="Alexeev D.G."/>
            <person name="Ladygina V.G."/>
            <person name="Govorun V.M."/>
        </authorList>
    </citation>
    <scope>NUCLEOTIDE SEQUENCE [LARGE SCALE GENOMIC DNA]</scope>
    <source>
        <strain>PG-8A</strain>
    </source>
</reference>
<comment type="function">
    <text evidence="1">Catalyzes the GTP-dependent ribosomal translocation step during translation elongation. During this step, the ribosome changes from the pre-translocational (PRE) to the post-translocational (POST) state as the newly formed A-site-bound peptidyl-tRNA and P-site-bound deacylated tRNA move to the P and E sites, respectively. Catalyzes the coordinated movement of the two tRNA molecules, the mRNA and conformational changes in the ribosome.</text>
</comment>
<comment type="subcellular location">
    <subcellularLocation>
        <location evidence="1">Cytoplasm</location>
    </subcellularLocation>
</comment>
<comment type="similarity">
    <text evidence="1">Belongs to the TRAFAC class translation factor GTPase superfamily. Classic translation factor GTPase family. EF-G/EF-2 subfamily.</text>
</comment>
<protein>
    <recommendedName>
        <fullName evidence="1">Elongation factor G</fullName>
        <shortName evidence="1">EF-G</shortName>
    </recommendedName>
</protein>
<feature type="chain" id="PRO_1000074945" description="Elongation factor G">
    <location>
        <begin position="1"/>
        <end position="690"/>
    </location>
</feature>
<feature type="domain" description="tr-type G">
    <location>
        <begin position="8"/>
        <end position="282"/>
    </location>
</feature>
<feature type="binding site" evidence="1">
    <location>
        <begin position="17"/>
        <end position="24"/>
    </location>
    <ligand>
        <name>GTP</name>
        <dbReference type="ChEBI" id="CHEBI:37565"/>
    </ligand>
</feature>
<feature type="binding site" evidence="1">
    <location>
        <begin position="81"/>
        <end position="85"/>
    </location>
    <ligand>
        <name>GTP</name>
        <dbReference type="ChEBI" id="CHEBI:37565"/>
    </ligand>
</feature>
<feature type="binding site" evidence="1">
    <location>
        <begin position="135"/>
        <end position="138"/>
    </location>
    <ligand>
        <name>GTP</name>
        <dbReference type="ChEBI" id="CHEBI:37565"/>
    </ligand>
</feature>
<dbReference type="EMBL" id="CP000896">
    <property type="protein sequence ID" value="ABX80813.1"/>
    <property type="molecule type" value="Genomic_DNA"/>
</dbReference>
<dbReference type="RefSeq" id="WP_012242144.1">
    <property type="nucleotide sequence ID" value="NC_010163.1"/>
</dbReference>
<dbReference type="SMR" id="A9NEN3"/>
<dbReference type="STRING" id="441768.ACL_0187"/>
<dbReference type="GeneID" id="41338379"/>
<dbReference type="KEGG" id="acl:ACL_0187"/>
<dbReference type="eggNOG" id="COG0480">
    <property type="taxonomic scope" value="Bacteria"/>
</dbReference>
<dbReference type="HOGENOM" id="CLU_002794_4_1_14"/>
<dbReference type="OrthoDB" id="9804431at2"/>
<dbReference type="Proteomes" id="UP000008558">
    <property type="component" value="Chromosome"/>
</dbReference>
<dbReference type="GO" id="GO:0005737">
    <property type="term" value="C:cytoplasm"/>
    <property type="evidence" value="ECO:0007669"/>
    <property type="project" value="UniProtKB-SubCell"/>
</dbReference>
<dbReference type="GO" id="GO:0005525">
    <property type="term" value="F:GTP binding"/>
    <property type="evidence" value="ECO:0007669"/>
    <property type="project" value="UniProtKB-UniRule"/>
</dbReference>
<dbReference type="GO" id="GO:0003924">
    <property type="term" value="F:GTPase activity"/>
    <property type="evidence" value="ECO:0007669"/>
    <property type="project" value="InterPro"/>
</dbReference>
<dbReference type="GO" id="GO:0003746">
    <property type="term" value="F:translation elongation factor activity"/>
    <property type="evidence" value="ECO:0007669"/>
    <property type="project" value="UniProtKB-UniRule"/>
</dbReference>
<dbReference type="GO" id="GO:0032790">
    <property type="term" value="P:ribosome disassembly"/>
    <property type="evidence" value="ECO:0007669"/>
    <property type="project" value="TreeGrafter"/>
</dbReference>
<dbReference type="CDD" id="cd01886">
    <property type="entry name" value="EF-G"/>
    <property type="match status" value="1"/>
</dbReference>
<dbReference type="CDD" id="cd16262">
    <property type="entry name" value="EFG_III"/>
    <property type="match status" value="1"/>
</dbReference>
<dbReference type="CDD" id="cd01434">
    <property type="entry name" value="EFG_mtEFG1_IV"/>
    <property type="match status" value="1"/>
</dbReference>
<dbReference type="CDD" id="cd03713">
    <property type="entry name" value="EFG_mtEFG_C"/>
    <property type="match status" value="1"/>
</dbReference>
<dbReference type="CDD" id="cd04088">
    <property type="entry name" value="EFG_mtEFG_II"/>
    <property type="match status" value="1"/>
</dbReference>
<dbReference type="FunFam" id="2.40.30.10:FF:000006">
    <property type="entry name" value="Elongation factor G"/>
    <property type="match status" value="1"/>
</dbReference>
<dbReference type="FunFam" id="3.30.230.10:FF:000003">
    <property type="entry name" value="Elongation factor G"/>
    <property type="match status" value="1"/>
</dbReference>
<dbReference type="FunFam" id="3.30.70.240:FF:000001">
    <property type="entry name" value="Elongation factor G"/>
    <property type="match status" value="1"/>
</dbReference>
<dbReference type="FunFam" id="3.30.70.870:FF:000001">
    <property type="entry name" value="Elongation factor G"/>
    <property type="match status" value="1"/>
</dbReference>
<dbReference type="FunFam" id="3.40.50.300:FF:000029">
    <property type="entry name" value="Elongation factor G"/>
    <property type="match status" value="1"/>
</dbReference>
<dbReference type="Gene3D" id="3.30.230.10">
    <property type="match status" value="1"/>
</dbReference>
<dbReference type="Gene3D" id="3.30.70.240">
    <property type="match status" value="1"/>
</dbReference>
<dbReference type="Gene3D" id="3.30.70.870">
    <property type="entry name" value="Elongation Factor G (Translational Gtpase), domain 3"/>
    <property type="match status" value="1"/>
</dbReference>
<dbReference type="Gene3D" id="3.40.50.300">
    <property type="entry name" value="P-loop containing nucleotide triphosphate hydrolases"/>
    <property type="match status" value="1"/>
</dbReference>
<dbReference type="Gene3D" id="2.40.30.10">
    <property type="entry name" value="Translation factors"/>
    <property type="match status" value="1"/>
</dbReference>
<dbReference type="HAMAP" id="MF_00054_B">
    <property type="entry name" value="EF_G_EF_2_B"/>
    <property type="match status" value="1"/>
</dbReference>
<dbReference type="InterPro" id="IPR053905">
    <property type="entry name" value="EF-G-like_DII"/>
</dbReference>
<dbReference type="InterPro" id="IPR041095">
    <property type="entry name" value="EFG_II"/>
</dbReference>
<dbReference type="InterPro" id="IPR009022">
    <property type="entry name" value="EFG_III"/>
</dbReference>
<dbReference type="InterPro" id="IPR035647">
    <property type="entry name" value="EFG_III/V"/>
</dbReference>
<dbReference type="InterPro" id="IPR047872">
    <property type="entry name" value="EFG_IV"/>
</dbReference>
<dbReference type="InterPro" id="IPR035649">
    <property type="entry name" value="EFG_V"/>
</dbReference>
<dbReference type="InterPro" id="IPR000640">
    <property type="entry name" value="EFG_V-like"/>
</dbReference>
<dbReference type="InterPro" id="IPR031157">
    <property type="entry name" value="G_TR_CS"/>
</dbReference>
<dbReference type="InterPro" id="IPR027417">
    <property type="entry name" value="P-loop_NTPase"/>
</dbReference>
<dbReference type="InterPro" id="IPR020568">
    <property type="entry name" value="Ribosomal_Su5_D2-typ_SF"/>
</dbReference>
<dbReference type="InterPro" id="IPR014721">
    <property type="entry name" value="Ribsml_uS5_D2-typ_fold_subgr"/>
</dbReference>
<dbReference type="InterPro" id="IPR005225">
    <property type="entry name" value="Small_GTP-bd"/>
</dbReference>
<dbReference type="InterPro" id="IPR000795">
    <property type="entry name" value="T_Tr_GTP-bd_dom"/>
</dbReference>
<dbReference type="InterPro" id="IPR009000">
    <property type="entry name" value="Transl_B-barrel_sf"/>
</dbReference>
<dbReference type="InterPro" id="IPR004540">
    <property type="entry name" value="Transl_elong_EFG/EF2"/>
</dbReference>
<dbReference type="InterPro" id="IPR005517">
    <property type="entry name" value="Transl_elong_EFG/EF2_IV"/>
</dbReference>
<dbReference type="NCBIfam" id="TIGR00484">
    <property type="entry name" value="EF-G"/>
    <property type="match status" value="1"/>
</dbReference>
<dbReference type="NCBIfam" id="NF009381">
    <property type="entry name" value="PRK12740.1-5"/>
    <property type="match status" value="1"/>
</dbReference>
<dbReference type="NCBIfam" id="TIGR00231">
    <property type="entry name" value="small_GTP"/>
    <property type="match status" value="1"/>
</dbReference>
<dbReference type="PANTHER" id="PTHR43261:SF1">
    <property type="entry name" value="RIBOSOME-RELEASING FACTOR 2, MITOCHONDRIAL"/>
    <property type="match status" value="1"/>
</dbReference>
<dbReference type="PANTHER" id="PTHR43261">
    <property type="entry name" value="TRANSLATION ELONGATION FACTOR G-RELATED"/>
    <property type="match status" value="1"/>
</dbReference>
<dbReference type="Pfam" id="PF22042">
    <property type="entry name" value="EF-G_D2"/>
    <property type="match status" value="1"/>
</dbReference>
<dbReference type="Pfam" id="PF00679">
    <property type="entry name" value="EFG_C"/>
    <property type="match status" value="1"/>
</dbReference>
<dbReference type="Pfam" id="PF14492">
    <property type="entry name" value="EFG_III"/>
    <property type="match status" value="1"/>
</dbReference>
<dbReference type="Pfam" id="PF03764">
    <property type="entry name" value="EFG_IV"/>
    <property type="match status" value="1"/>
</dbReference>
<dbReference type="Pfam" id="PF00009">
    <property type="entry name" value="GTP_EFTU"/>
    <property type="match status" value="1"/>
</dbReference>
<dbReference type="PRINTS" id="PR00315">
    <property type="entry name" value="ELONGATNFCT"/>
</dbReference>
<dbReference type="SMART" id="SM00838">
    <property type="entry name" value="EFG_C"/>
    <property type="match status" value="1"/>
</dbReference>
<dbReference type="SMART" id="SM00889">
    <property type="entry name" value="EFG_IV"/>
    <property type="match status" value="1"/>
</dbReference>
<dbReference type="SUPFAM" id="SSF54980">
    <property type="entry name" value="EF-G C-terminal domain-like"/>
    <property type="match status" value="2"/>
</dbReference>
<dbReference type="SUPFAM" id="SSF52540">
    <property type="entry name" value="P-loop containing nucleoside triphosphate hydrolases"/>
    <property type="match status" value="1"/>
</dbReference>
<dbReference type="SUPFAM" id="SSF54211">
    <property type="entry name" value="Ribosomal protein S5 domain 2-like"/>
    <property type="match status" value="1"/>
</dbReference>
<dbReference type="SUPFAM" id="SSF50447">
    <property type="entry name" value="Translation proteins"/>
    <property type="match status" value="1"/>
</dbReference>
<dbReference type="PROSITE" id="PS00301">
    <property type="entry name" value="G_TR_1"/>
    <property type="match status" value="1"/>
</dbReference>
<dbReference type="PROSITE" id="PS51722">
    <property type="entry name" value="G_TR_2"/>
    <property type="match status" value="1"/>
</dbReference>
<keyword id="KW-0963">Cytoplasm</keyword>
<keyword id="KW-0251">Elongation factor</keyword>
<keyword id="KW-0342">GTP-binding</keyword>
<keyword id="KW-0547">Nucleotide-binding</keyword>
<keyword id="KW-0648">Protein biosynthesis</keyword>
<keyword id="KW-1185">Reference proteome</keyword>
<sequence length="690" mass="76335">MPRQYSLKMTRNIGIMAHIDAGKTTTTERILFHTGKIHKTGETHDGASQMDWMAQEQERGITITSAATTSVWRDHRVNIIDTPGHVDFTVEVSRSLRVLDGAVTVIDAQAGVEPQTETVWRQATEYKVPRIVYVNKMDKIGADFNNAIKTLHRRLGVKANAIQLPIGTELDFSGIIDLVTMTAVEYSGDALETTKEIPIPAHLEEQAIDMRNELIEAVAEFDDELMVTYLEGEEVSVELLKRAIRKGVLAVEFFPVVAGSSFKNKGVRKVLDAVIDYLPSPLDIPPVLGHTSEGVEVYRHADDEEPFTALAFKVMTDPFVGKLTFFRVYSGKIKSGSYVQNTTKGERERFGRILQMHANTRQEIDEVYAGDIAAAVGLKVTTTGNTLATQNDDIILESMNFPEPVIEVAVEPKTKNDQDKMGQALAKLAEEDPTFKTYTNTETGQTIIAGMGELHLDILVDRMKREFKVEANVTEPQVSYRETLTVPNEIEAKFIRQSGGRGQYGHVVIDFEPNPGKGFEFVDKIVGGVIPREYIPSVQKGLEEALGGGILAGFPVVDIKATLKFGSYHDVDSSEMAYKIAASMALKDAKNKANAVILEPIMDVEVVTPNDYVGNVIGDITSRRGRLESQEGRGNAISIRAFVPLSEMFGYATSLRSNTQGRATFVMQFDHFDKVPKSIQEEIIKKRGSN</sequence>
<evidence type="ECO:0000255" key="1">
    <source>
        <dbReference type="HAMAP-Rule" id="MF_00054"/>
    </source>
</evidence>